<accession>C0QV47</accession>
<name>GPMA_BRAHW</name>
<gene>
    <name evidence="1" type="primary">gpmA</name>
    <name type="ordered locus">BHWA1_01885</name>
</gene>
<feature type="chain" id="PRO_1000149505" description="2,3-bisphosphoglycerate-dependent phosphoglycerate mutase">
    <location>
        <begin position="1"/>
        <end position="248"/>
    </location>
</feature>
<feature type="active site" description="Tele-phosphohistidine intermediate" evidence="1">
    <location>
        <position position="9"/>
    </location>
</feature>
<feature type="active site" description="Proton donor/acceptor" evidence="1">
    <location>
        <position position="87"/>
    </location>
</feature>
<feature type="binding site" evidence="1">
    <location>
        <begin position="8"/>
        <end position="15"/>
    </location>
    <ligand>
        <name>substrate</name>
    </ligand>
</feature>
<feature type="binding site" evidence="1">
    <location>
        <begin position="21"/>
        <end position="22"/>
    </location>
    <ligand>
        <name>substrate</name>
    </ligand>
</feature>
<feature type="binding site" evidence="1">
    <location>
        <position position="60"/>
    </location>
    <ligand>
        <name>substrate</name>
    </ligand>
</feature>
<feature type="binding site" evidence="1">
    <location>
        <begin position="87"/>
        <end position="90"/>
    </location>
    <ligand>
        <name>substrate</name>
    </ligand>
</feature>
<feature type="binding site" evidence="1">
    <location>
        <position position="98"/>
    </location>
    <ligand>
        <name>substrate</name>
    </ligand>
</feature>
<feature type="binding site" evidence="1">
    <location>
        <begin position="114"/>
        <end position="115"/>
    </location>
    <ligand>
        <name>substrate</name>
    </ligand>
</feature>
<feature type="binding site" evidence="1">
    <location>
        <begin position="183"/>
        <end position="184"/>
    </location>
    <ligand>
        <name>substrate</name>
    </ligand>
</feature>
<feature type="site" description="Transition state stabilizer" evidence="1">
    <location>
        <position position="182"/>
    </location>
</feature>
<reference key="1">
    <citation type="journal article" date="2009" name="PLoS ONE">
        <title>Genome sequence of the pathogenic intestinal spirochete Brachyspira hyodysenteriae reveals adaptations to its lifestyle in the porcine large intestine.</title>
        <authorList>
            <person name="Bellgard M.I."/>
            <person name="Wanchanthuek P."/>
            <person name="La T."/>
            <person name="Ryan K."/>
            <person name="Moolhuijzen P."/>
            <person name="Albertyn Z."/>
            <person name="Shaban B."/>
            <person name="Motro Y."/>
            <person name="Dunn D.S."/>
            <person name="Schibeci D."/>
            <person name="Hunter A."/>
            <person name="Barrero R."/>
            <person name="Phillips N.D."/>
            <person name="Hampson D.J."/>
        </authorList>
    </citation>
    <scope>NUCLEOTIDE SEQUENCE [LARGE SCALE GENOMIC DNA]</scope>
    <source>
        <strain>ATCC 49526 / WA1</strain>
    </source>
</reference>
<evidence type="ECO:0000255" key="1">
    <source>
        <dbReference type="HAMAP-Rule" id="MF_01039"/>
    </source>
</evidence>
<sequence>MTKVVLIRHGESVWNKENLFTGWADVTLSEKGIEEAKAGGAELKKAGFTFDKAYTSTLTRAIKTLNLVLEEMGLLWIPVDKCWQLNERHYGALQGLNKSQTAEKYGEDQVKIWRRSYDTPPPALEKSDERYPGHDPRYKNLSEKELPLTECLKDTVARVVPFWENVILPDIKAGKKIIIAAHGNSLRALVKYLDNISDADITELNIPTGMPLVYELDDNFKAVNKQYLGDPEAVKKAMEAVANQGKKK</sequence>
<organism>
    <name type="scientific">Brachyspira hyodysenteriae (strain ATCC 49526 / WA1)</name>
    <dbReference type="NCBI Taxonomy" id="565034"/>
    <lineage>
        <taxon>Bacteria</taxon>
        <taxon>Pseudomonadati</taxon>
        <taxon>Spirochaetota</taxon>
        <taxon>Spirochaetia</taxon>
        <taxon>Brachyspirales</taxon>
        <taxon>Brachyspiraceae</taxon>
        <taxon>Brachyspira</taxon>
    </lineage>
</organism>
<dbReference type="EC" id="5.4.2.11" evidence="1"/>
<dbReference type="EMBL" id="CP001357">
    <property type="protein sequence ID" value="ACN84348.1"/>
    <property type="molecule type" value="Genomic_DNA"/>
</dbReference>
<dbReference type="RefSeq" id="WP_012671388.1">
    <property type="nucleotide sequence ID" value="NC_012225.1"/>
</dbReference>
<dbReference type="SMR" id="C0QV47"/>
<dbReference type="STRING" id="565034.BHWA1_01885"/>
<dbReference type="GeneID" id="63962976"/>
<dbReference type="KEGG" id="bhy:BHWA1_01885"/>
<dbReference type="eggNOG" id="COG0588">
    <property type="taxonomic scope" value="Bacteria"/>
</dbReference>
<dbReference type="HOGENOM" id="CLU_033323_1_1_12"/>
<dbReference type="UniPathway" id="UPA00109">
    <property type="reaction ID" value="UER00186"/>
</dbReference>
<dbReference type="Proteomes" id="UP000001803">
    <property type="component" value="Chromosome"/>
</dbReference>
<dbReference type="GO" id="GO:0004619">
    <property type="term" value="F:phosphoglycerate mutase activity"/>
    <property type="evidence" value="ECO:0007669"/>
    <property type="project" value="UniProtKB-EC"/>
</dbReference>
<dbReference type="GO" id="GO:0006094">
    <property type="term" value="P:gluconeogenesis"/>
    <property type="evidence" value="ECO:0007669"/>
    <property type="project" value="UniProtKB-UniRule"/>
</dbReference>
<dbReference type="GO" id="GO:0006096">
    <property type="term" value="P:glycolytic process"/>
    <property type="evidence" value="ECO:0007669"/>
    <property type="project" value="UniProtKB-UniRule"/>
</dbReference>
<dbReference type="CDD" id="cd07067">
    <property type="entry name" value="HP_PGM_like"/>
    <property type="match status" value="1"/>
</dbReference>
<dbReference type="FunFam" id="3.40.50.1240:FF:000003">
    <property type="entry name" value="2,3-bisphosphoglycerate-dependent phosphoglycerate mutase"/>
    <property type="match status" value="1"/>
</dbReference>
<dbReference type="Gene3D" id="3.40.50.1240">
    <property type="entry name" value="Phosphoglycerate mutase-like"/>
    <property type="match status" value="1"/>
</dbReference>
<dbReference type="HAMAP" id="MF_01039">
    <property type="entry name" value="PGAM_GpmA"/>
    <property type="match status" value="1"/>
</dbReference>
<dbReference type="InterPro" id="IPR013078">
    <property type="entry name" value="His_Pase_superF_clade-1"/>
</dbReference>
<dbReference type="InterPro" id="IPR029033">
    <property type="entry name" value="His_PPase_superfam"/>
</dbReference>
<dbReference type="InterPro" id="IPR001345">
    <property type="entry name" value="PG/BPGM_mutase_AS"/>
</dbReference>
<dbReference type="InterPro" id="IPR005952">
    <property type="entry name" value="Phosphogly_mut1"/>
</dbReference>
<dbReference type="NCBIfam" id="TIGR01258">
    <property type="entry name" value="pgm_1"/>
    <property type="match status" value="1"/>
</dbReference>
<dbReference type="NCBIfam" id="NF010713">
    <property type="entry name" value="PRK14115.1"/>
    <property type="match status" value="1"/>
</dbReference>
<dbReference type="PANTHER" id="PTHR11931">
    <property type="entry name" value="PHOSPHOGLYCERATE MUTASE"/>
    <property type="match status" value="1"/>
</dbReference>
<dbReference type="Pfam" id="PF00300">
    <property type="entry name" value="His_Phos_1"/>
    <property type="match status" value="2"/>
</dbReference>
<dbReference type="PIRSF" id="PIRSF000709">
    <property type="entry name" value="6PFK_2-Ptase"/>
    <property type="match status" value="1"/>
</dbReference>
<dbReference type="SMART" id="SM00855">
    <property type="entry name" value="PGAM"/>
    <property type="match status" value="1"/>
</dbReference>
<dbReference type="SUPFAM" id="SSF53254">
    <property type="entry name" value="Phosphoglycerate mutase-like"/>
    <property type="match status" value="1"/>
</dbReference>
<dbReference type="PROSITE" id="PS00175">
    <property type="entry name" value="PG_MUTASE"/>
    <property type="match status" value="1"/>
</dbReference>
<proteinExistence type="inferred from homology"/>
<keyword id="KW-0312">Gluconeogenesis</keyword>
<keyword id="KW-0324">Glycolysis</keyword>
<keyword id="KW-0413">Isomerase</keyword>
<comment type="function">
    <text evidence="1">Catalyzes the interconversion of 2-phosphoglycerate and 3-phosphoglycerate.</text>
</comment>
<comment type="catalytic activity">
    <reaction evidence="1">
        <text>(2R)-2-phosphoglycerate = (2R)-3-phosphoglycerate</text>
        <dbReference type="Rhea" id="RHEA:15901"/>
        <dbReference type="ChEBI" id="CHEBI:58272"/>
        <dbReference type="ChEBI" id="CHEBI:58289"/>
        <dbReference type="EC" id="5.4.2.11"/>
    </reaction>
</comment>
<comment type="pathway">
    <text evidence="1">Carbohydrate degradation; glycolysis; pyruvate from D-glyceraldehyde 3-phosphate: step 3/5.</text>
</comment>
<comment type="similarity">
    <text evidence="1">Belongs to the phosphoglycerate mutase family. BPG-dependent PGAM subfamily.</text>
</comment>
<protein>
    <recommendedName>
        <fullName evidence="1">2,3-bisphosphoglycerate-dependent phosphoglycerate mutase</fullName>
        <shortName evidence="1">BPG-dependent PGAM</shortName>
        <shortName evidence="1">PGAM</shortName>
        <shortName evidence="1">Phosphoglyceromutase</shortName>
        <shortName evidence="1">dPGM</shortName>
        <ecNumber evidence="1">5.4.2.11</ecNumber>
    </recommendedName>
</protein>